<protein>
    <recommendedName>
        <fullName>Protein king tubby 1</fullName>
    </recommendedName>
</protein>
<feature type="chain" id="PRO_0000400830" description="Protein king tubby 1">
    <location>
        <begin position="1"/>
        <end position="410"/>
    </location>
</feature>
<feature type="region of interest" description="Disordered" evidence="3">
    <location>
        <begin position="44"/>
        <end position="109"/>
    </location>
</feature>
<feature type="region of interest" description="Disordered" evidence="3">
    <location>
        <begin position="121"/>
        <end position="159"/>
    </location>
</feature>
<feature type="compositionally biased region" description="Polar residues" evidence="3">
    <location>
        <begin position="47"/>
        <end position="72"/>
    </location>
</feature>
<feature type="compositionally biased region" description="Basic and acidic residues" evidence="3">
    <location>
        <begin position="132"/>
        <end position="143"/>
    </location>
</feature>
<reference evidence="5" key="1">
    <citation type="journal article" date="2007" name="Science">
        <title>Genome sequence of Aedes aegypti, a major arbovirus vector.</title>
        <authorList>
            <person name="Nene V."/>
            <person name="Wortman J.R."/>
            <person name="Lawson D."/>
            <person name="Haas B.J."/>
            <person name="Kodira C.D."/>
            <person name="Tu Z.J."/>
            <person name="Loftus B.J."/>
            <person name="Xi Z."/>
            <person name="Megy K."/>
            <person name="Grabherr M."/>
            <person name="Ren Q."/>
            <person name="Zdobnov E.M."/>
            <person name="Lobo N.F."/>
            <person name="Campbell K.S."/>
            <person name="Brown S.E."/>
            <person name="Bonaldo M.F."/>
            <person name="Zhu J."/>
            <person name="Sinkins S.P."/>
            <person name="Hogenkamp D.G."/>
            <person name="Amedeo P."/>
            <person name="Arensburger P."/>
            <person name="Atkinson P.W."/>
            <person name="Bidwell S.L."/>
            <person name="Biedler J."/>
            <person name="Birney E."/>
            <person name="Bruggner R.V."/>
            <person name="Costas J."/>
            <person name="Coy M.R."/>
            <person name="Crabtree J."/>
            <person name="Crawford M."/>
            <person name="DeBruyn B."/>
            <person name="DeCaprio D."/>
            <person name="Eiglmeier K."/>
            <person name="Eisenstadt E."/>
            <person name="El-Dorry H."/>
            <person name="Gelbart W.M."/>
            <person name="Gomes S.L."/>
            <person name="Hammond M."/>
            <person name="Hannick L.I."/>
            <person name="Hogan J.R."/>
            <person name="Holmes M.H."/>
            <person name="Jaffe D."/>
            <person name="Johnston S.J."/>
            <person name="Kennedy R.C."/>
            <person name="Koo H."/>
            <person name="Kravitz S."/>
            <person name="Kriventseva E.V."/>
            <person name="Kulp D."/>
            <person name="Labutti K."/>
            <person name="Lee E."/>
            <person name="Li S."/>
            <person name="Lovin D.D."/>
            <person name="Mao C."/>
            <person name="Mauceli E."/>
            <person name="Menck C.F."/>
            <person name="Miller J.R."/>
            <person name="Montgomery P."/>
            <person name="Mori A."/>
            <person name="Nascimento A.L."/>
            <person name="Naveira H.F."/>
            <person name="Nusbaum C."/>
            <person name="O'Leary S.B."/>
            <person name="Orvis J."/>
            <person name="Pertea M."/>
            <person name="Quesneville H."/>
            <person name="Reidenbach K.R."/>
            <person name="Rogers Y.-H.C."/>
            <person name="Roth C.W."/>
            <person name="Schneider J.R."/>
            <person name="Schatz M."/>
            <person name="Shumway M."/>
            <person name="Stanke M."/>
            <person name="Stinson E.O."/>
            <person name="Tubio J.M.C."/>
            <person name="Vanzee J.P."/>
            <person name="Verjovski-Almeida S."/>
            <person name="Werner D."/>
            <person name="White O.R."/>
            <person name="Wyder S."/>
            <person name="Zeng Q."/>
            <person name="Zhao Q."/>
            <person name="Zhao Y."/>
            <person name="Hill C.A."/>
            <person name="Raikhel A.S."/>
            <person name="Soares M.B."/>
            <person name="Knudson D.L."/>
            <person name="Lee N.H."/>
            <person name="Galagan J."/>
            <person name="Salzberg S.L."/>
            <person name="Paulsen I.T."/>
            <person name="Dimopoulos G."/>
            <person name="Collins F.H."/>
            <person name="Bruce B."/>
            <person name="Fraser-Liggett C.M."/>
            <person name="Severson D.W."/>
        </authorList>
    </citation>
    <scope>NUCLEOTIDE SEQUENCE [LARGE SCALE GENOMIC DNA]</scope>
    <source>
        <strain>LVPib12</strain>
    </source>
</reference>
<name>TULP1_AEDAE</name>
<gene>
    <name type="primary">king-tubby1</name>
    <name type="ORF">AAEL012983</name>
</gene>
<organism>
    <name type="scientific">Aedes aegypti</name>
    <name type="common">Yellowfever mosquito</name>
    <name type="synonym">Culex aegypti</name>
    <dbReference type="NCBI Taxonomy" id="7159"/>
    <lineage>
        <taxon>Eukaryota</taxon>
        <taxon>Metazoa</taxon>
        <taxon>Ecdysozoa</taxon>
        <taxon>Arthropoda</taxon>
        <taxon>Hexapoda</taxon>
        <taxon>Insecta</taxon>
        <taxon>Pterygota</taxon>
        <taxon>Neoptera</taxon>
        <taxon>Endopterygota</taxon>
        <taxon>Diptera</taxon>
        <taxon>Nematocera</taxon>
        <taxon>Culicoidea</taxon>
        <taxon>Culicidae</taxon>
        <taxon>Culicinae</taxon>
        <taxon>Aedini</taxon>
        <taxon>Aedes</taxon>
        <taxon>Stegomyia</taxon>
    </lineage>
</organism>
<proteinExistence type="inferred from homology"/>
<dbReference type="EMBL" id="CH477957">
    <property type="protein sequence ID" value="EAT34795.1"/>
    <property type="status" value="ALT_INIT"/>
    <property type="molecule type" value="Genomic_DNA"/>
</dbReference>
<dbReference type="RefSeq" id="XP_001663175.1">
    <property type="nucleotide sequence ID" value="XM_001663125.1"/>
</dbReference>
<dbReference type="SMR" id="Q16KI5"/>
<dbReference type="FunCoup" id="Q16KI5">
    <property type="interactions" value="193"/>
</dbReference>
<dbReference type="STRING" id="7159.Q16KI5"/>
<dbReference type="PaxDb" id="7159-AAEL012983-PA"/>
<dbReference type="VEuPathDB" id="VectorBase:AAEL013575"/>
<dbReference type="eggNOG" id="KOG2502">
    <property type="taxonomic scope" value="Eukaryota"/>
</dbReference>
<dbReference type="HOGENOM" id="CLU_028236_1_1_1"/>
<dbReference type="InParanoid" id="Q16KI5"/>
<dbReference type="Proteomes" id="UP000008820">
    <property type="component" value="Unassembled WGS sequence"/>
</dbReference>
<dbReference type="Proteomes" id="UP000682892">
    <property type="component" value="Chromosome 3"/>
</dbReference>
<dbReference type="GO" id="GO:0005929">
    <property type="term" value="C:cilium"/>
    <property type="evidence" value="ECO:0007669"/>
    <property type="project" value="TreeGrafter"/>
</dbReference>
<dbReference type="GO" id="GO:0005737">
    <property type="term" value="C:cytoplasm"/>
    <property type="evidence" value="ECO:0000250"/>
    <property type="project" value="UniProtKB"/>
</dbReference>
<dbReference type="GO" id="GO:0005634">
    <property type="term" value="C:nucleus"/>
    <property type="evidence" value="ECO:0000250"/>
    <property type="project" value="UniProtKB"/>
</dbReference>
<dbReference type="GO" id="GO:0061512">
    <property type="term" value="P:protein localization to cilium"/>
    <property type="evidence" value="ECO:0007669"/>
    <property type="project" value="TreeGrafter"/>
</dbReference>
<dbReference type="FunFam" id="3.20.90.10:FF:000001">
    <property type="entry name" value="Tubby-like protein"/>
    <property type="match status" value="1"/>
</dbReference>
<dbReference type="Gene3D" id="3.20.90.10">
    <property type="entry name" value="Tubby Protein, Chain A"/>
    <property type="match status" value="1"/>
</dbReference>
<dbReference type="InterPro" id="IPR025659">
    <property type="entry name" value="Tubby-like_C"/>
</dbReference>
<dbReference type="InterPro" id="IPR000007">
    <property type="entry name" value="Tubby_C"/>
</dbReference>
<dbReference type="InterPro" id="IPR018066">
    <property type="entry name" value="Tubby_C_CS"/>
</dbReference>
<dbReference type="PANTHER" id="PTHR16517:SF7">
    <property type="entry name" value="PROTEIN KING TUBBY"/>
    <property type="match status" value="1"/>
</dbReference>
<dbReference type="PANTHER" id="PTHR16517">
    <property type="entry name" value="TUBBY-RELATED"/>
    <property type="match status" value="1"/>
</dbReference>
<dbReference type="Pfam" id="PF01167">
    <property type="entry name" value="Tub"/>
    <property type="match status" value="1"/>
</dbReference>
<dbReference type="PRINTS" id="PR01573">
    <property type="entry name" value="SUPERTUBBY"/>
</dbReference>
<dbReference type="SUPFAM" id="SSF54518">
    <property type="entry name" value="Tubby C-terminal domain-like"/>
    <property type="match status" value="1"/>
</dbReference>
<dbReference type="PROSITE" id="PS01200">
    <property type="entry name" value="TUB_1"/>
    <property type="match status" value="1"/>
</dbReference>
<dbReference type="PROSITE" id="PS01201">
    <property type="entry name" value="TUB_2"/>
    <property type="match status" value="1"/>
</dbReference>
<comment type="subcellular location">
    <subcellularLocation>
        <location evidence="1">Cytoplasm</location>
    </subcellularLocation>
    <subcellularLocation>
        <location evidence="1">Nucleus</location>
    </subcellularLocation>
</comment>
<comment type="similarity">
    <text evidence="2">Belongs to the TUB family.</text>
</comment>
<comment type="sequence caution" evidence="4">
    <conflict type="erroneous initiation">
        <sequence resource="EMBL-CDS" id="EAT34795"/>
    </conflict>
    <text>Extended N-terminus.</text>
</comment>
<keyword id="KW-0963">Cytoplasm</keyword>
<keyword id="KW-0539">Nucleus</keyword>
<keyword id="KW-1185">Reference proteome</keyword>
<sequence length="410" mass="45564">MEAYIRQKRATPGMVQASDMQLVRPMSAVNRNGREVHAYDGPMQFMMSPNNPDQILTSTGNASVTTTPTSPYSDAPLEKLTPSSQDSEDEESTPVDILPSSNSFDSTRHSADHLLTHSAPISPALMNNNGGSHHDSSSGKSVEHSSPQASGHNDTEGDVVGPIEQWVTQPAPQGVLYKCRITRDRKGMDRGLFPIYYLHLERDYGKKVFCLAGRKRKKSKTSNYIISCDPTDLSRQADGFVGKLRSNVFGTTFFVYDSGKKEDHGNPRLDLAVVIYDTNILGFKGPRNMTVLLPGMTEDDQRVKISSADSQQGLLDSWKSKNMDNVVELHNKTPIWNDETQSYVLNFHGRVTQASVKNFQLVHDSDPDYIVMQFGRTSDDIFTMDFRYPLCAFQAFAIALSSFDGKLACE</sequence>
<evidence type="ECO:0000250" key="1">
    <source>
        <dbReference type="UniProtKB" id="Q86PC9"/>
    </source>
</evidence>
<evidence type="ECO:0000255" key="2"/>
<evidence type="ECO:0000256" key="3">
    <source>
        <dbReference type="SAM" id="MobiDB-lite"/>
    </source>
</evidence>
<evidence type="ECO:0000305" key="4"/>
<evidence type="ECO:0000312" key="5">
    <source>
        <dbReference type="EMBL" id="EAT34795.1"/>
    </source>
</evidence>
<accession>Q16KI5</accession>